<gene>
    <name type="primary">erg6</name>
    <name type="ORF">T552_03167</name>
</gene>
<feature type="chain" id="PRO_0000124796" description="Sterol 24-C-methyltransferase">
    <location>
        <begin position="1"/>
        <end position="377"/>
    </location>
</feature>
<accession>Q96WX4</accession>
<accession>A0A0W4ZC26</accession>
<dbReference type="EC" id="2.1.1.-" evidence="2 3"/>
<dbReference type="EMBL" id="AY032981">
    <property type="protein sequence ID" value="AAK54439.1"/>
    <property type="molecule type" value="mRNA"/>
</dbReference>
<dbReference type="EMBL" id="LFVZ01000015">
    <property type="protein sequence ID" value="KTW25893.1"/>
    <property type="molecule type" value="Genomic_DNA"/>
</dbReference>
<dbReference type="RefSeq" id="XP_018224473.1">
    <property type="nucleotide sequence ID" value="XM_018371680.1"/>
</dbReference>
<dbReference type="SMR" id="Q96WX4"/>
<dbReference type="GeneID" id="28937883"/>
<dbReference type="VEuPathDB" id="FungiDB:T552_03167"/>
<dbReference type="OrthoDB" id="540004at2759"/>
<dbReference type="BRENDA" id="2.1.1.142">
    <property type="organism ID" value="4924"/>
</dbReference>
<dbReference type="BRENDA" id="2.1.1.41">
    <property type="organism ID" value="4924"/>
</dbReference>
<dbReference type="Proteomes" id="UP000054454">
    <property type="component" value="Unassembled WGS sequence"/>
</dbReference>
<dbReference type="GO" id="GO:0005783">
    <property type="term" value="C:endoplasmic reticulum"/>
    <property type="evidence" value="ECO:0007669"/>
    <property type="project" value="EnsemblFungi"/>
</dbReference>
<dbReference type="GO" id="GO:0005811">
    <property type="term" value="C:lipid droplet"/>
    <property type="evidence" value="ECO:0007669"/>
    <property type="project" value="EnsemblFungi"/>
</dbReference>
<dbReference type="GO" id="GO:0042802">
    <property type="term" value="F:identical protein binding"/>
    <property type="evidence" value="ECO:0007669"/>
    <property type="project" value="EnsemblFungi"/>
</dbReference>
<dbReference type="GO" id="GO:0003838">
    <property type="term" value="F:sterol 24-C-methyltransferase activity"/>
    <property type="evidence" value="ECO:0007669"/>
    <property type="project" value="EnsemblFungi"/>
</dbReference>
<dbReference type="GO" id="GO:0006696">
    <property type="term" value="P:ergosterol biosynthetic process"/>
    <property type="evidence" value="ECO:0007669"/>
    <property type="project" value="EnsemblFungi"/>
</dbReference>
<dbReference type="GO" id="GO:0032259">
    <property type="term" value="P:methylation"/>
    <property type="evidence" value="ECO:0007669"/>
    <property type="project" value="UniProtKB-KW"/>
</dbReference>
<dbReference type="CDD" id="cd02440">
    <property type="entry name" value="AdoMet_MTases"/>
    <property type="match status" value="1"/>
</dbReference>
<dbReference type="Gene3D" id="3.40.50.150">
    <property type="entry name" value="Vaccinia Virus protein VP39"/>
    <property type="match status" value="1"/>
</dbReference>
<dbReference type="InterPro" id="IPR050447">
    <property type="entry name" value="Erg6_SMT_methyltransf"/>
</dbReference>
<dbReference type="InterPro" id="IPR013216">
    <property type="entry name" value="Methyltransf_11"/>
</dbReference>
<dbReference type="InterPro" id="IPR030384">
    <property type="entry name" value="MeTrfase_SMT"/>
</dbReference>
<dbReference type="InterPro" id="IPR029063">
    <property type="entry name" value="SAM-dependent_MTases_sf"/>
</dbReference>
<dbReference type="InterPro" id="IPR013705">
    <property type="entry name" value="Sterol_MeTrfase_C"/>
</dbReference>
<dbReference type="PANTHER" id="PTHR44068:SF1">
    <property type="entry name" value="HYPOTHETICAL LOC100005854"/>
    <property type="match status" value="1"/>
</dbReference>
<dbReference type="PANTHER" id="PTHR44068">
    <property type="entry name" value="ZGC:194242"/>
    <property type="match status" value="1"/>
</dbReference>
<dbReference type="Pfam" id="PF08241">
    <property type="entry name" value="Methyltransf_11"/>
    <property type="match status" value="1"/>
</dbReference>
<dbReference type="Pfam" id="PF08498">
    <property type="entry name" value="Sterol_MT_C"/>
    <property type="match status" value="1"/>
</dbReference>
<dbReference type="SUPFAM" id="SSF53335">
    <property type="entry name" value="S-adenosyl-L-methionine-dependent methyltransferases"/>
    <property type="match status" value="1"/>
</dbReference>
<dbReference type="PROSITE" id="PS51685">
    <property type="entry name" value="SAM_MT_ERG6_SMT"/>
    <property type="match status" value="1"/>
</dbReference>
<evidence type="ECO:0000255" key="1">
    <source>
        <dbReference type="PROSITE-ProRule" id="PRU01022"/>
    </source>
</evidence>
<evidence type="ECO:0000269" key="2">
    <source>
    </source>
</evidence>
<evidence type="ECO:0000269" key="3">
    <source>
    </source>
</evidence>
<evidence type="ECO:0000303" key="4">
    <source>
    </source>
</evidence>
<evidence type="ECO:0000303" key="5">
    <source>
    </source>
</evidence>
<evidence type="ECO:0000305" key="6">
    <source>
    </source>
</evidence>
<name>ERG6_PNEC8</name>
<proteinExistence type="evidence at protein level"/>
<sequence>MSFELERIDIEKDREFSEIMHGKDAAKERGLLSSFRKDKEAQKIALDSYFGFWGDKCTSEKNDIHQQERFKFYATLTRHYYNLVTDFYEYGWSTSFHFCRFAKDESFSQAIARHEHYIALHAGIREGETVLDVGCGVGGPACQISVFTGANIVGLNNNDYQIQRAKYYSEKKGLSDKLKFIKGDFMQMPFPENSFDKIYSIEATIHAPSLEGVYSEIYRVLKPGGLYASYEWVMLNKYDENDPEHQQIVYGIEIGDSIPKISKIGEAEAALIKVGFEIIHSEELSTKNSPLPWYYYLDGDLRKVRSFRDFISIARMTTIGKWLISSFIGLMEFIGLLPKGSKKVNDILLVAADSLVKAGKKEIFTPMQLWVCRKPLV</sequence>
<protein>
    <recommendedName>
        <fullName>Sterol 24-C-methyltransferase</fullName>
        <ecNumber evidence="2 3">2.1.1.-</ecNumber>
    </recommendedName>
    <alternativeName>
        <fullName>Delta(24)-sterol C-methyltransferase</fullName>
    </alternativeName>
    <alternativeName>
        <fullName evidence="5">S-adenosyl-L-methionine:sterol C-24 methyl transferase</fullName>
        <shortName evidence="4">SAM:SMT</shortName>
    </alternativeName>
</protein>
<keyword id="KW-0444">Lipid biosynthesis</keyword>
<keyword id="KW-0443">Lipid metabolism</keyword>
<keyword id="KW-0489">Methyltransferase</keyword>
<keyword id="KW-0949">S-adenosyl-L-methionine</keyword>
<keyword id="KW-0752">Steroid biosynthesis</keyword>
<keyword id="KW-0753">Steroid metabolism</keyword>
<keyword id="KW-0756">Sterol biosynthesis</keyword>
<keyword id="KW-1207">Sterol metabolism</keyword>
<keyword id="KW-0808">Transferase</keyword>
<organism>
    <name type="scientific">Pneumocystis carinii (strain B80)</name>
    <name type="common">Rat pneumocystis pneumonia agent</name>
    <name type="synonym">Pneumocystis carinii f. sp. carinii</name>
    <dbReference type="NCBI Taxonomy" id="1408658"/>
    <lineage>
        <taxon>Eukaryota</taxon>
        <taxon>Fungi</taxon>
        <taxon>Dikarya</taxon>
        <taxon>Ascomycota</taxon>
        <taxon>Taphrinomycotina</taxon>
        <taxon>Pneumocystomycetes</taxon>
        <taxon>Pneumocystaceae</taxon>
        <taxon>Pneumocystis</taxon>
    </lineage>
</organism>
<reference key="1">
    <citation type="journal article" date="2001" name="J. Eukaryot. Microbiol.">
        <title>Pneumocystis carinii erg6 gene: sequencing and expression of recombinant SAM:sterol methyltransferase in heterologous systems.</title>
        <authorList>
            <person name="Kaneshiro E.S."/>
            <person name="Rosenfeld J.A."/>
            <person name="Basselin M."/>
            <person name="Bradshaw S."/>
            <person name="Stringer J.R."/>
            <person name="Smulian A.G."/>
            <person name="Giner J.L."/>
        </authorList>
    </citation>
    <scope>NUCLEOTIDE SEQUENCE [MRNA]</scope>
    <scope>CATALYTIC ACTIVITY</scope>
</reference>
<reference key="2">
    <citation type="journal article" date="2016" name="Nat. Commun.">
        <title>Genome analysis of three Pneumocystis species reveals adaptation mechanisms to life exclusively in mammalian hosts.</title>
        <authorList>
            <person name="Ma L."/>
            <person name="Chen Z."/>
            <person name="Huang D.W."/>
            <person name="Kutty G."/>
            <person name="Ishihara M."/>
            <person name="Wang H."/>
            <person name="Abouelleil A."/>
            <person name="Bishop L."/>
            <person name="Davey E."/>
            <person name="Deng R."/>
            <person name="Deng X."/>
            <person name="Fan L."/>
            <person name="Fantoni G."/>
            <person name="Fitzgerald M."/>
            <person name="Gogineni E."/>
            <person name="Goldberg J.M."/>
            <person name="Handley G."/>
            <person name="Hu X."/>
            <person name="Huber C."/>
            <person name="Jiao X."/>
            <person name="Jones K."/>
            <person name="Levin J.Z."/>
            <person name="Liu Y."/>
            <person name="Macdonald P."/>
            <person name="Melnikov A."/>
            <person name="Raley C."/>
            <person name="Sassi M."/>
            <person name="Sherman B.T."/>
            <person name="Song X."/>
            <person name="Sykes S."/>
            <person name="Tran B."/>
            <person name="Walsh L."/>
            <person name="Xia Y."/>
            <person name="Yang J."/>
            <person name="Young S."/>
            <person name="Zeng Q."/>
            <person name="Zheng X."/>
            <person name="Stephens R."/>
            <person name="Nusbaum C."/>
            <person name="Birren B.W."/>
            <person name="Azadi P."/>
            <person name="Lempicki R.A."/>
            <person name="Cuomo C.A."/>
            <person name="Kovacs J.A."/>
        </authorList>
    </citation>
    <scope>NUCLEOTIDE SEQUENCE [LARGE SCALE GENOMIC DNA]</scope>
    <source>
        <strain>B80</strain>
    </source>
</reference>
<reference key="3">
    <citation type="journal article" date="2002" name="Mol. Microbiol.">
        <title>The Pneumocystis carinii drug target S-adenosyl-L-methionine:sterol C-24 methyl transferase has a unique substrate preference.</title>
        <authorList>
            <person name="Kaneshiro E.S."/>
            <person name="Rosenfeld J.A."/>
            <person name="Basselin-Eiweida M."/>
            <person name="Stringer J.R."/>
            <person name="Keely S.P."/>
            <person name="Smulian A.G."/>
            <person name="Giner J.L."/>
        </authorList>
    </citation>
    <scope>FUNCTION</scope>
    <scope>CATALYTIC ACTIVITY</scope>
    <scope>BIOPHYSICOCHEMICAL PROPERTIES</scope>
    <scope>PATHWAY</scope>
</reference>
<comment type="function">
    <text evidence="3">Catalyzes the transfer of 2 methyl groups from 2 S-adenosyl-methionine molecules to the C-24 of lanosterol, producing first eburicol (24-methylenelanosterol) from lanosterol and then pneumocysterol (24Z-ethylidenelanosterol) from eburicol.</text>
</comment>
<comment type="catalytic activity">
    <reaction evidence="2 3">
        <text>lanosterol + S-adenosyl-L-methionine = eburicol + S-adenosyl-L-homocysteine + H(+)</text>
        <dbReference type="Rhea" id="RHEA:52652"/>
        <dbReference type="ChEBI" id="CHEBI:15378"/>
        <dbReference type="ChEBI" id="CHEBI:16521"/>
        <dbReference type="ChEBI" id="CHEBI:57856"/>
        <dbReference type="ChEBI" id="CHEBI:59789"/>
        <dbReference type="ChEBI" id="CHEBI:70315"/>
    </reaction>
</comment>
<comment type="catalytic activity">
    <reaction evidence="2 3">
        <text>eburicol + S-adenosyl-L-methionine = (24Z)-ethylidenelanosterol + S-adenosyl-L-homocysteine + H(+)</text>
        <dbReference type="Rhea" id="RHEA:55088"/>
        <dbReference type="ChEBI" id="CHEBI:15378"/>
        <dbReference type="ChEBI" id="CHEBI:57856"/>
        <dbReference type="ChEBI" id="CHEBI:59789"/>
        <dbReference type="ChEBI" id="CHEBI:70315"/>
        <dbReference type="ChEBI" id="CHEBI:138589"/>
    </reaction>
</comment>
<comment type="biophysicochemical properties">
    <kinetics>
        <KM evidence="3">10.6 uM for lanosterol</KM>
        <KM evidence="3">19.1 uM for 24-methylenelanosterol</KM>
        <KM evidence="3">40.6 uM for zymosterol</KM>
        <Vmax evidence="3">154.7 pmol/min/mg enzyme for lanosterol</Vmax>
        <Vmax evidence="3">738.3 pmol/min/mg enzyme for 24-methylenelanosterol</Vmax>
        <Vmax evidence="3">41.9 pmol/min/mg enzyme for zymosterol</Vmax>
    </kinetics>
    <phDependence>
        <text evidence="3">Optimum pH is 7.5.</text>
    </phDependence>
    <temperatureDependence>
        <text evidence="3">Optimum temperature is 37 degrees Celsius.</text>
    </temperatureDependence>
</comment>
<comment type="pathway">
    <text evidence="6">Steroid metabolism.</text>
</comment>
<comment type="miscellaneous">
    <text evidence="6">Cholesterol is the major sterol found in P.carinii, of which most, if not all, is scavenged from the host. In addition to cholesterol, 41 other sterols have been detected in P.carinii, but ergosterol, the major sterol in higher fungi, is not among them.</text>
</comment>
<comment type="similarity">
    <text evidence="1">Belongs to the class I-like SAM-binding methyltransferase superfamily. Erg6/SMT family.</text>
</comment>